<gene>
    <name evidence="1" type="primary">yqgF</name>
    <name type="ordered locus">EcSMS35_3091</name>
</gene>
<evidence type="ECO:0000255" key="1">
    <source>
        <dbReference type="HAMAP-Rule" id="MF_00651"/>
    </source>
</evidence>
<sequence>MSGTLLAFDFGTKSIGVAVGQRITGTARPLPAIKAQDGTPDWNLIERLLKEWQPDEIIVGLPLNMDGTEQPLTARARKFANRIHGRFGVEVKLHDERLSTVEARSGLFEQGGYRALNKGKVDSASAVIILESYFEQGY</sequence>
<keyword id="KW-0963">Cytoplasm</keyword>
<keyword id="KW-0378">Hydrolase</keyword>
<keyword id="KW-0540">Nuclease</keyword>
<keyword id="KW-0690">Ribosome biogenesis</keyword>
<accession>B1LDF8</accession>
<reference key="1">
    <citation type="journal article" date="2008" name="J. Bacteriol.">
        <title>Insights into the environmental resistance gene pool from the genome sequence of the multidrug-resistant environmental isolate Escherichia coli SMS-3-5.</title>
        <authorList>
            <person name="Fricke W.F."/>
            <person name="Wright M.S."/>
            <person name="Lindell A.H."/>
            <person name="Harkins D.M."/>
            <person name="Baker-Austin C."/>
            <person name="Ravel J."/>
            <person name="Stepanauskas R."/>
        </authorList>
    </citation>
    <scope>NUCLEOTIDE SEQUENCE [LARGE SCALE GENOMIC DNA]</scope>
    <source>
        <strain>SMS-3-5 / SECEC</strain>
    </source>
</reference>
<proteinExistence type="inferred from homology"/>
<organism>
    <name type="scientific">Escherichia coli (strain SMS-3-5 / SECEC)</name>
    <dbReference type="NCBI Taxonomy" id="439855"/>
    <lineage>
        <taxon>Bacteria</taxon>
        <taxon>Pseudomonadati</taxon>
        <taxon>Pseudomonadota</taxon>
        <taxon>Gammaproteobacteria</taxon>
        <taxon>Enterobacterales</taxon>
        <taxon>Enterobacteriaceae</taxon>
        <taxon>Escherichia</taxon>
    </lineage>
</organism>
<dbReference type="EC" id="3.1.-.-" evidence="1"/>
<dbReference type="EMBL" id="CP000970">
    <property type="protein sequence ID" value="ACB17642.1"/>
    <property type="molecule type" value="Genomic_DNA"/>
</dbReference>
<dbReference type="BMRB" id="B1LDF8"/>
<dbReference type="SMR" id="B1LDF8"/>
<dbReference type="KEGG" id="ecm:EcSMS35_3091"/>
<dbReference type="HOGENOM" id="CLU_098240_3_0_6"/>
<dbReference type="Proteomes" id="UP000007011">
    <property type="component" value="Chromosome"/>
</dbReference>
<dbReference type="GO" id="GO:0005829">
    <property type="term" value="C:cytosol"/>
    <property type="evidence" value="ECO:0007669"/>
    <property type="project" value="TreeGrafter"/>
</dbReference>
<dbReference type="GO" id="GO:0004518">
    <property type="term" value="F:nuclease activity"/>
    <property type="evidence" value="ECO:0007669"/>
    <property type="project" value="UniProtKB-KW"/>
</dbReference>
<dbReference type="GO" id="GO:0000967">
    <property type="term" value="P:rRNA 5'-end processing"/>
    <property type="evidence" value="ECO:0007669"/>
    <property type="project" value="UniProtKB-UniRule"/>
</dbReference>
<dbReference type="CDD" id="cd16964">
    <property type="entry name" value="YqgF"/>
    <property type="match status" value="1"/>
</dbReference>
<dbReference type="FunFam" id="3.30.420.140:FF:000002">
    <property type="entry name" value="Putative pre-16S rRNA nuclease"/>
    <property type="match status" value="1"/>
</dbReference>
<dbReference type="Gene3D" id="3.30.420.140">
    <property type="entry name" value="YqgF/RNase H-like domain"/>
    <property type="match status" value="1"/>
</dbReference>
<dbReference type="HAMAP" id="MF_00651">
    <property type="entry name" value="Nuclease_YqgF"/>
    <property type="match status" value="1"/>
</dbReference>
<dbReference type="InterPro" id="IPR012337">
    <property type="entry name" value="RNaseH-like_sf"/>
</dbReference>
<dbReference type="InterPro" id="IPR005227">
    <property type="entry name" value="YqgF"/>
</dbReference>
<dbReference type="InterPro" id="IPR006641">
    <property type="entry name" value="YqgF/RNaseH-like_dom"/>
</dbReference>
<dbReference type="InterPro" id="IPR037027">
    <property type="entry name" value="YqgF/RNaseH-like_dom_sf"/>
</dbReference>
<dbReference type="NCBIfam" id="TIGR00250">
    <property type="entry name" value="RNAse_H_YqgF"/>
    <property type="match status" value="1"/>
</dbReference>
<dbReference type="PANTHER" id="PTHR33317">
    <property type="entry name" value="POLYNUCLEOTIDYL TRANSFERASE, RIBONUCLEASE H-LIKE SUPERFAMILY PROTEIN"/>
    <property type="match status" value="1"/>
</dbReference>
<dbReference type="PANTHER" id="PTHR33317:SF4">
    <property type="entry name" value="POLYNUCLEOTIDYL TRANSFERASE, RIBONUCLEASE H-LIKE SUPERFAMILY PROTEIN"/>
    <property type="match status" value="1"/>
</dbReference>
<dbReference type="Pfam" id="PF03652">
    <property type="entry name" value="RuvX"/>
    <property type="match status" value="1"/>
</dbReference>
<dbReference type="SMART" id="SM00732">
    <property type="entry name" value="YqgFc"/>
    <property type="match status" value="1"/>
</dbReference>
<dbReference type="SUPFAM" id="SSF53098">
    <property type="entry name" value="Ribonuclease H-like"/>
    <property type="match status" value="1"/>
</dbReference>
<feature type="chain" id="PRO_1000131034" description="Putative pre-16S rRNA nuclease">
    <location>
        <begin position="1"/>
        <end position="138"/>
    </location>
</feature>
<comment type="function">
    <text evidence="1">Could be a nuclease involved in processing of the 5'-end of pre-16S rRNA.</text>
</comment>
<comment type="subcellular location">
    <subcellularLocation>
        <location evidence="1">Cytoplasm</location>
    </subcellularLocation>
</comment>
<comment type="similarity">
    <text evidence="1">Belongs to the YqgF nuclease family.</text>
</comment>
<protein>
    <recommendedName>
        <fullName evidence="1">Putative pre-16S rRNA nuclease</fullName>
        <ecNumber evidence="1">3.1.-.-</ecNumber>
    </recommendedName>
</protein>
<name>YQGF_ECOSM</name>